<reference key="1">
    <citation type="journal article" date="2008" name="PLoS Genet.">
        <title>Genomic islands in the pathogenic filamentous fungus Aspergillus fumigatus.</title>
        <authorList>
            <person name="Fedorova N.D."/>
            <person name="Khaldi N."/>
            <person name="Joardar V.S."/>
            <person name="Maiti R."/>
            <person name="Amedeo P."/>
            <person name="Anderson M.J."/>
            <person name="Crabtree J."/>
            <person name="Silva J.C."/>
            <person name="Badger J.H."/>
            <person name="Albarraq A."/>
            <person name="Angiuoli S."/>
            <person name="Bussey H."/>
            <person name="Bowyer P."/>
            <person name="Cotty P.J."/>
            <person name="Dyer P.S."/>
            <person name="Egan A."/>
            <person name="Galens K."/>
            <person name="Fraser-Liggett C.M."/>
            <person name="Haas B.J."/>
            <person name="Inman J.M."/>
            <person name="Kent R."/>
            <person name="Lemieux S."/>
            <person name="Malavazi I."/>
            <person name="Orvis J."/>
            <person name="Roemer T."/>
            <person name="Ronning C.M."/>
            <person name="Sundaram J.P."/>
            <person name="Sutton G."/>
            <person name="Turner G."/>
            <person name="Venter J.C."/>
            <person name="White O.R."/>
            <person name="Whitty B.R."/>
            <person name="Youngman P."/>
            <person name="Wolfe K.H."/>
            <person name="Goldman G.H."/>
            <person name="Wortman J.R."/>
            <person name="Jiang B."/>
            <person name="Denning D.W."/>
            <person name="Nierman W.C."/>
        </authorList>
    </citation>
    <scope>NUCLEOTIDE SEQUENCE [LARGE SCALE GENOMIC DNA]</scope>
    <source>
        <strain>ATCC 1007 / CBS 513.65 / DSM 816 / NCTC 3887 / NRRL 1 / QM 1276 / 107</strain>
    </source>
</reference>
<evidence type="ECO:0000250" key="1">
    <source>
        <dbReference type="UniProtKB" id="Q96DW6"/>
    </source>
</evidence>
<evidence type="ECO:0000255" key="2">
    <source>
        <dbReference type="HAMAP-Rule" id="MF_03064"/>
    </source>
</evidence>
<protein>
    <recommendedName>
        <fullName evidence="2">Mitochondrial glycine transporter</fullName>
    </recommendedName>
    <alternativeName>
        <fullName evidence="2">Solute carrier family 25 member 38 homolog</fullName>
    </alternativeName>
</protein>
<dbReference type="EMBL" id="DS027054">
    <property type="protein sequence ID" value="EAW10661.1"/>
    <property type="molecule type" value="Genomic_DNA"/>
</dbReference>
<dbReference type="RefSeq" id="XP_001272087.1">
    <property type="nucleotide sequence ID" value="XM_001272086.1"/>
</dbReference>
<dbReference type="SMR" id="A1CIF6"/>
<dbReference type="STRING" id="344612.A1CIF6"/>
<dbReference type="EnsemblFungi" id="EAW10661">
    <property type="protein sequence ID" value="EAW10661"/>
    <property type="gene ID" value="ACLA_051330"/>
</dbReference>
<dbReference type="GeneID" id="4703666"/>
<dbReference type="KEGG" id="act:ACLA_051330"/>
<dbReference type="VEuPathDB" id="FungiDB:ACLA_051330"/>
<dbReference type="eggNOG" id="KOG0766">
    <property type="taxonomic scope" value="Eukaryota"/>
</dbReference>
<dbReference type="HOGENOM" id="CLU_015166_0_3_1"/>
<dbReference type="OMA" id="WGIYEEL"/>
<dbReference type="OrthoDB" id="1924968at2759"/>
<dbReference type="Proteomes" id="UP000006701">
    <property type="component" value="Unassembled WGS sequence"/>
</dbReference>
<dbReference type="GO" id="GO:0005743">
    <property type="term" value="C:mitochondrial inner membrane"/>
    <property type="evidence" value="ECO:0007669"/>
    <property type="project" value="UniProtKB-SubCell"/>
</dbReference>
<dbReference type="GO" id="GO:0015187">
    <property type="term" value="F:glycine transmembrane transporter activity"/>
    <property type="evidence" value="ECO:0007669"/>
    <property type="project" value="UniProtKB-UniRule"/>
</dbReference>
<dbReference type="GO" id="GO:1904983">
    <property type="term" value="P:glycine import into mitochondrion"/>
    <property type="evidence" value="ECO:0007669"/>
    <property type="project" value="UniProtKB-UniRule"/>
</dbReference>
<dbReference type="GO" id="GO:0006783">
    <property type="term" value="P:heme biosynthetic process"/>
    <property type="evidence" value="ECO:0007669"/>
    <property type="project" value="EnsemblFungi"/>
</dbReference>
<dbReference type="FunFam" id="1.50.40.10:FF:000103">
    <property type="entry name" value="Mitochondrial glycine transporter"/>
    <property type="match status" value="1"/>
</dbReference>
<dbReference type="Gene3D" id="1.50.40.10">
    <property type="entry name" value="Mitochondrial carrier domain"/>
    <property type="match status" value="1"/>
</dbReference>
<dbReference type="HAMAP" id="MF_03064">
    <property type="entry name" value="SLC25A38"/>
    <property type="match status" value="1"/>
</dbReference>
<dbReference type="InterPro" id="IPR030847">
    <property type="entry name" value="Hem25/SLC25A38"/>
</dbReference>
<dbReference type="InterPro" id="IPR018108">
    <property type="entry name" value="Mitochondrial_sb/sol_carrier"/>
</dbReference>
<dbReference type="InterPro" id="IPR023395">
    <property type="entry name" value="Mt_carrier_dom_sf"/>
</dbReference>
<dbReference type="PANTHER" id="PTHR46181">
    <property type="entry name" value="MITOCHONDRIAL GLYCINE TRANSPORTER"/>
    <property type="match status" value="1"/>
</dbReference>
<dbReference type="PANTHER" id="PTHR46181:SF3">
    <property type="entry name" value="MITOCHONDRIAL GLYCINE TRANSPORTER"/>
    <property type="match status" value="1"/>
</dbReference>
<dbReference type="Pfam" id="PF00153">
    <property type="entry name" value="Mito_carr"/>
    <property type="match status" value="3"/>
</dbReference>
<dbReference type="SUPFAM" id="SSF103506">
    <property type="entry name" value="Mitochondrial carrier"/>
    <property type="match status" value="1"/>
</dbReference>
<dbReference type="PROSITE" id="PS50920">
    <property type="entry name" value="SOLCAR"/>
    <property type="match status" value="3"/>
</dbReference>
<name>S2538_ASPCL</name>
<sequence>MSNNATTYVVSPAPLKTTSTSSKTTFHFVAGLCSGLTSSILLQPADLLKTRVQQSHKSASLLPTLKTILSSPHPIRSLWRGTLPSALRTGFGSALYFTSLNALRQGIAQTRTPLAIASASSDGKARTSSSALPKLSNWANLATGAIARVAAGFVMMPVTVLKVRYESDYYAYRSLVGAGRDIVRTEGVRGLFSGFGATAARDAPYAGLYVLFYEQLKRRLASVASSEYSEQPLKTSSSSSINFVSGGLAAGLATAITNPFDAVKTRLQLMPGKYGNMMRAVRLMIHEDGVRSLFGGLGLRITRKALSSALAWTVYEELILRAEGHWAEQGKINL</sequence>
<comment type="function">
    <text evidence="2">Mitochondrial glycine transporter that imports glycine into the mitochondrial matrix. Plays an important role in providing glycine for the first enzymatic step in heme biosynthesis, the condensation of glycine with succinyl-CoA to produce 5-aminolevulinate (ALA) in the mitochondrial matrix.</text>
</comment>
<comment type="catalytic activity">
    <reaction evidence="1">
        <text>glycine(in) = glycine(out)</text>
        <dbReference type="Rhea" id="RHEA:70715"/>
        <dbReference type="ChEBI" id="CHEBI:57305"/>
    </reaction>
</comment>
<comment type="subcellular location">
    <subcellularLocation>
        <location evidence="2">Mitochondrion inner membrane</location>
        <topology evidence="2">Multi-pass membrane protein</topology>
    </subcellularLocation>
</comment>
<comment type="similarity">
    <text evidence="2">Belongs to the mitochondrial carrier (TC 2.A.29) family. SLC25A38 subfamily.</text>
</comment>
<keyword id="KW-0472">Membrane</keyword>
<keyword id="KW-0496">Mitochondrion</keyword>
<keyword id="KW-0999">Mitochondrion inner membrane</keyword>
<keyword id="KW-1185">Reference proteome</keyword>
<keyword id="KW-0677">Repeat</keyword>
<keyword id="KW-0812">Transmembrane</keyword>
<keyword id="KW-1133">Transmembrane helix</keyword>
<keyword id="KW-0813">Transport</keyword>
<feature type="chain" id="PRO_0000378924" description="Mitochondrial glycine transporter">
    <location>
        <begin position="1"/>
        <end position="334"/>
    </location>
</feature>
<feature type="transmembrane region" description="Helical; Name=1" evidence="2">
    <location>
        <begin position="28"/>
        <end position="53"/>
    </location>
</feature>
<feature type="transmembrane region" description="Helical; Name=2" evidence="2">
    <location>
        <begin position="81"/>
        <end position="107"/>
    </location>
</feature>
<feature type="transmembrane region" description="Helical; Name=3" evidence="2">
    <location>
        <begin position="141"/>
        <end position="166"/>
    </location>
</feature>
<feature type="transmembrane region" description="Helical; Name=4" evidence="2">
    <location>
        <begin position="194"/>
        <end position="217"/>
    </location>
</feature>
<feature type="transmembrane region" description="Helical; Name=5" evidence="2">
    <location>
        <begin position="241"/>
        <end position="267"/>
    </location>
</feature>
<feature type="transmembrane region" description="Helical; Name=6" evidence="2">
    <location>
        <begin position="296"/>
        <end position="314"/>
    </location>
</feature>
<feature type="repeat" description="Solcar 1" evidence="2">
    <location>
        <begin position="22"/>
        <end position="106"/>
    </location>
</feature>
<feature type="repeat" description="Solcar 2" evidence="2">
    <location>
        <begin position="135"/>
        <end position="219"/>
    </location>
</feature>
<feature type="repeat" description="Solcar 3" evidence="2">
    <location>
        <begin position="237"/>
        <end position="321"/>
    </location>
</feature>
<accession>A1CIF6</accession>
<proteinExistence type="inferred from homology"/>
<organism>
    <name type="scientific">Aspergillus clavatus (strain ATCC 1007 / CBS 513.65 / DSM 816 / NCTC 3887 / NRRL 1 / QM 1276 / 107)</name>
    <dbReference type="NCBI Taxonomy" id="344612"/>
    <lineage>
        <taxon>Eukaryota</taxon>
        <taxon>Fungi</taxon>
        <taxon>Dikarya</taxon>
        <taxon>Ascomycota</taxon>
        <taxon>Pezizomycotina</taxon>
        <taxon>Eurotiomycetes</taxon>
        <taxon>Eurotiomycetidae</taxon>
        <taxon>Eurotiales</taxon>
        <taxon>Aspergillaceae</taxon>
        <taxon>Aspergillus</taxon>
        <taxon>Aspergillus subgen. Fumigati</taxon>
    </lineage>
</organism>
<gene>
    <name type="ORF">ACLA_051330</name>
</gene>